<evidence type="ECO:0000305" key="1"/>
<dbReference type="EC" id="2.3.1.-"/>
<dbReference type="EMBL" id="X61083">
    <property type="protein sequence ID" value="CAA43397.1"/>
    <property type="molecule type" value="Genomic_DNA"/>
</dbReference>
<dbReference type="EMBL" id="U26430">
    <property type="protein sequence ID" value="AAC44090.1"/>
    <property type="molecule type" value="Genomic_DNA"/>
</dbReference>
<dbReference type="EMBL" id="AE006469">
    <property type="protein sequence ID" value="AAK65073.1"/>
    <property type="molecule type" value="Genomic_DNA"/>
</dbReference>
<dbReference type="PIR" id="G95313">
    <property type="entry name" value="G95313"/>
</dbReference>
<dbReference type="PIR" id="S20844">
    <property type="entry name" value="S20844"/>
</dbReference>
<dbReference type="RefSeq" id="NP_435661.1">
    <property type="nucleotide sequence ID" value="NC_003037.1"/>
</dbReference>
<dbReference type="RefSeq" id="WP_010967405.1">
    <property type="nucleotide sequence ID" value="NC_003037.1"/>
</dbReference>
<dbReference type="SMR" id="P28266"/>
<dbReference type="EnsemblBacteria" id="AAK65073">
    <property type="protein sequence ID" value="AAK65073"/>
    <property type="gene ID" value="SMa0772"/>
</dbReference>
<dbReference type="KEGG" id="sme:SMa0772"/>
<dbReference type="PATRIC" id="fig|266834.11.peg.433"/>
<dbReference type="HOGENOM" id="CLU_051638_3_3_5"/>
<dbReference type="OrthoDB" id="9815592at2"/>
<dbReference type="Proteomes" id="UP000001976">
    <property type="component" value="Plasmid pSymA"/>
</dbReference>
<dbReference type="GO" id="GO:0005829">
    <property type="term" value="C:cytosol"/>
    <property type="evidence" value="ECO:0007669"/>
    <property type="project" value="TreeGrafter"/>
</dbReference>
<dbReference type="GO" id="GO:0016407">
    <property type="term" value="F:acetyltransferase activity"/>
    <property type="evidence" value="ECO:0007669"/>
    <property type="project" value="InterPro"/>
</dbReference>
<dbReference type="GO" id="GO:0008374">
    <property type="term" value="F:O-acyltransferase activity"/>
    <property type="evidence" value="ECO:0007669"/>
    <property type="project" value="TreeGrafter"/>
</dbReference>
<dbReference type="CDD" id="cd03357">
    <property type="entry name" value="LbH_MAT_GAT"/>
    <property type="match status" value="1"/>
</dbReference>
<dbReference type="FunFam" id="2.160.10.10:FF:000025">
    <property type="entry name" value="Hexapeptide-repeat containing-acetyltransferase"/>
    <property type="match status" value="1"/>
</dbReference>
<dbReference type="Gene3D" id="2.160.10.10">
    <property type="entry name" value="Hexapeptide repeat proteins"/>
    <property type="match status" value="1"/>
</dbReference>
<dbReference type="InterPro" id="IPR001451">
    <property type="entry name" value="Hexapep"/>
</dbReference>
<dbReference type="InterPro" id="IPR018357">
    <property type="entry name" value="Hexapep_transf_CS"/>
</dbReference>
<dbReference type="InterPro" id="IPR051159">
    <property type="entry name" value="Hexapeptide_acetyltransf"/>
</dbReference>
<dbReference type="InterPro" id="IPR024688">
    <property type="entry name" value="Mac_dom"/>
</dbReference>
<dbReference type="InterPro" id="IPR011004">
    <property type="entry name" value="Trimer_LpxA-like_sf"/>
</dbReference>
<dbReference type="PANTHER" id="PTHR23416:SF23">
    <property type="entry name" value="ACETYLTRANSFERASE C18B11.09C-RELATED"/>
    <property type="match status" value="1"/>
</dbReference>
<dbReference type="PANTHER" id="PTHR23416">
    <property type="entry name" value="SIALIC ACID SYNTHASE-RELATED"/>
    <property type="match status" value="1"/>
</dbReference>
<dbReference type="Pfam" id="PF00132">
    <property type="entry name" value="Hexapep"/>
    <property type="match status" value="1"/>
</dbReference>
<dbReference type="Pfam" id="PF12464">
    <property type="entry name" value="Mac"/>
    <property type="match status" value="1"/>
</dbReference>
<dbReference type="SMART" id="SM01266">
    <property type="entry name" value="Mac"/>
    <property type="match status" value="1"/>
</dbReference>
<dbReference type="SUPFAM" id="SSF51161">
    <property type="entry name" value="Trimeric LpxA-like enzymes"/>
    <property type="match status" value="1"/>
</dbReference>
<dbReference type="PROSITE" id="PS00101">
    <property type="entry name" value="HEXAPEP_TRANSFERASES"/>
    <property type="match status" value="1"/>
</dbReference>
<comment type="function">
    <text>Acetyltransferase implicated in the O-acetylation of Nod factors.</text>
</comment>
<comment type="similarity">
    <text evidence="1">Belongs to the transferase hexapeptide repeat family.</text>
</comment>
<reference key="1">
    <citation type="journal article" date="1992" name="Plant Mol. Biol.">
        <title>Nucleotide sequence of the Rhizobium meliloti nodL gene located in locus n5 of the nod regulon.</title>
        <authorList>
            <person name="Baev N."/>
            <person name="Kondorosi A."/>
        </authorList>
    </citation>
    <scope>NUCLEOTIDE SEQUENCE [GENOMIC DNA]</scope>
    <source>
        <strain>AK631</strain>
    </source>
</reference>
<reference key="2">
    <citation type="journal article" date="1995" name="Mol. Microbiol.">
        <title>In Rhizobium meliloti, the operon associated with the nod box n5 comprises nodL, noeA and noeB, three host-range genes specifically required for the nodulation of particular Medicago species.</title>
        <authorList>
            <person name="Ardourel M."/>
            <person name="Lortet G."/>
            <person name="Maillet F."/>
            <person name="Roche P."/>
            <person name="Truchet G."/>
            <person name="Prome J.-C."/>
            <person name="Rosenberg C."/>
        </authorList>
    </citation>
    <scope>NUCLEOTIDE SEQUENCE [GENOMIC DNA]</scope>
    <source>
        <strain>RCR2011 / SU47</strain>
    </source>
</reference>
<reference key="3">
    <citation type="journal article" date="2001" name="Proc. Natl. Acad. Sci. U.S.A.">
        <title>Nucleotide sequence and predicted functions of the entire Sinorhizobium meliloti pSymA megaplasmid.</title>
        <authorList>
            <person name="Barnett M.J."/>
            <person name="Fisher R.F."/>
            <person name="Jones T."/>
            <person name="Komp C."/>
            <person name="Abola A.P."/>
            <person name="Barloy-Hubler F."/>
            <person name="Bowser L."/>
            <person name="Capela D."/>
            <person name="Galibert F."/>
            <person name="Gouzy J."/>
            <person name="Gurjal M."/>
            <person name="Hong A."/>
            <person name="Huizar L."/>
            <person name="Hyman R.W."/>
            <person name="Kahn D."/>
            <person name="Kahn M.L."/>
            <person name="Kalman S."/>
            <person name="Keating D.H."/>
            <person name="Palm C."/>
            <person name="Peck M.C."/>
            <person name="Surzycki R."/>
            <person name="Wells D.H."/>
            <person name="Yeh K.-C."/>
            <person name="Davis R.W."/>
            <person name="Federspiel N.A."/>
            <person name="Long S.R."/>
        </authorList>
    </citation>
    <scope>NUCLEOTIDE SEQUENCE [LARGE SCALE GENOMIC DNA]</scope>
    <source>
        <strain>1021</strain>
    </source>
</reference>
<reference key="4">
    <citation type="journal article" date="2001" name="Science">
        <title>The composite genome of the legume symbiont Sinorhizobium meliloti.</title>
        <authorList>
            <person name="Galibert F."/>
            <person name="Finan T.M."/>
            <person name="Long S.R."/>
            <person name="Puehler A."/>
            <person name="Abola P."/>
            <person name="Ampe F."/>
            <person name="Barloy-Hubler F."/>
            <person name="Barnett M.J."/>
            <person name="Becker A."/>
            <person name="Boistard P."/>
            <person name="Bothe G."/>
            <person name="Boutry M."/>
            <person name="Bowser L."/>
            <person name="Buhrmester J."/>
            <person name="Cadieu E."/>
            <person name="Capela D."/>
            <person name="Chain P."/>
            <person name="Cowie A."/>
            <person name="Davis R.W."/>
            <person name="Dreano S."/>
            <person name="Federspiel N.A."/>
            <person name="Fisher R.F."/>
            <person name="Gloux S."/>
            <person name="Godrie T."/>
            <person name="Goffeau A."/>
            <person name="Golding B."/>
            <person name="Gouzy J."/>
            <person name="Gurjal M."/>
            <person name="Hernandez-Lucas I."/>
            <person name="Hong A."/>
            <person name="Huizar L."/>
            <person name="Hyman R.W."/>
            <person name="Jones T."/>
            <person name="Kahn D."/>
            <person name="Kahn M.L."/>
            <person name="Kalman S."/>
            <person name="Keating D.H."/>
            <person name="Kiss E."/>
            <person name="Komp C."/>
            <person name="Lelaure V."/>
            <person name="Masuy D."/>
            <person name="Palm C."/>
            <person name="Peck M.C."/>
            <person name="Pohl T.M."/>
            <person name="Portetelle D."/>
            <person name="Purnelle B."/>
            <person name="Ramsperger U."/>
            <person name="Surzycki R."/>
            <person name="Thebault P."/>
            <person name="Vandenbol M."/>
            <person name="Vorhoelter F.J."/>
            <person name="Weidner S."/>
            <person name="Wells D.H."/>
            <person name="Wong K."/>
            <person name="Yeh K.-C."/>
            <person name="Batut J."/>
        </authorList>
    </citation>
    <scope>NUCLEOTIDE SEQUENCE [LARGE SCALE GENOMIC DNA]</scope>
    <source>
        <strain>1021</strain>
    </source>
</reference>
<geneLocation type="plasmid">
    <name>pSymA</name>
    <name>megaplasmid 1</name>
</geneLocation>
<gene>
    <name type="primary">nodL</name>
    <name type="ordered locus">RA0415</name>
    <name type="ORF">SMa0772</name>
</gene>
<name>NODL_RHIME</name>
<organism>
    <name type="scientific">Rhizobium meliloti (strain 1021)</name>
    <name type="common">Ensifer meliloti</name>
    <name type="synonym">Sinorhizobium meliloti</name>
    <dbReference type="NCBI Taxonomy" id="266834"/>
    <lineage>
        <taxon>Bacteria</taxon>
        <taxon>Pseudomonadati</taxon>
        <taxon>Pseudomonadota</taxon>
        <taxon>Alphaproteobacteria</taxon>
        <taxon>Hyphomicrobiales</taxon>
        <taxon>Rhizobiaceae</taxon>
        <taxon>Sinorhizobium/Ensifer group</taxon>
        <taxon>Sinorhizobium</taxon>
    </lineage>
</organism>
<sequence length="183" mass="19378">MTRTQKEKMLAGEMYNAADPEIQADLLAAGAWLKRYNSTLGDSAEQWHLFLREGLGEVGPGAVIRPPFHCDYGFNISIGAHAYMNFNCVILDVAKVTIGDGTAIGPAVQIYTADHPDDPEQRQAGLQLGRPVRIGKHVWIGGGAIILPGVTIGDHAVVGAGSVVTRDVPPGAKVMGSPARVRG</sequence>
<proteinExistence type="inferred from homology"/>
<accession>P28266</accession>
<feature type="chain" id="PRO_0000068695" description="Nodulation protein L">
    <location>
        <begin position="1"/>
        <end position="183"/>
    </location>
</feature>
<keyword id="KW-0012">Acyltransferase</keyword>
<keyword id="KW-0536">Nodulation</keyword>
<keyword id="KW-0614">Plasmid</keyword>
<keyword id="KW-1185">Reference proteome</keyword>
<keyword id="KW-0677">Repeat</keyword>
<keyword id="KW-0808">Transferase</keyword>
<protein>
    <recommendedName>
        <fullName>Nodulation protein L</fullName>
        <ecNumber>2.3.1.-</ecNumber>
    </recommendedName>
</protein>